<dbReference type="EC" id="2.7.4.25" evidence="1"/>
<dbReference type="EMBL" id="AM040264">
    <property type="protein sequence ID" value="CAJ09980.1"/>
    <property type="molecule type" value="Genomic_DNA"/>
</dbReference>
<dbReference type="RefSeq" id="WP_002965273.1">
    <property type="nucleotide sequence ID" value="NZ_KN046823.1"/>
</dbReference>
<dbReference type="SMR" id="Q2YPN5"/>
<dbReference type="STRING" id="359391.BAB1_0024"/>
<dbReference type="GeneID" id="93017490"/>
<dbReference type="KEGG" id="bmf:BAB1_0024"/>
<dbReference type="PATRIC" id="fig|359391.11.peg.1447"/>
<dbReference type="HOGENOM" id="CLU_079959_0_1_5"/>
<dbReference type="PhylomeDB" id="Q2YPN5"/>
<dbReference type="Proteomes" id="UP000002719">
    <property type="component" value="Chromosome I"/>
</dbReference>
<dbReference type="GO" id="GO:0005737">
    <property type="term" value="C:cytoplasm"/>
    <property type="evidence" value="ECO:0007669"/>
    <property type="project" value="UniProtKB-SubCell"/>
</dbReference>
<dbReference type="GO" id="GO:0005524">
    <property type="term" value="F:ATP binding"/>
    <property type="evidence" value="ECO:0007669"/>
    <property type="project" value="UniProtKB-UniRule"/>
</dbReference>
<dbReference type="GO" id="GO:0036430">
    <property type="term" value="F:CMP kinase activity"/>
    <property type="evidence" value="ECO:0007669"/>
    <property type="project" value="RHEA"/>
</dbReference>
<dbReference type="GO" id="GO:0036431">
    <property type="term" value="F:dCMP kinase activity"/>
    <property type="evidence" value="ECO:0007669"/>
    <property type="project" value="RHEA"/>
</dbReference>
<dbReference type="GO" id="GO:0006220">
    <property type="term" value="P:pyrimidine nucleotide metabolic process"/>
    <property type="evidence" value="ECO:0007669"/>
    <property type="project" value="UniProtKB-UniRule"/>
</dbReference>
<dbReference type="CDD" id="cd02020">
    <property type="entry name" value="CMPK"/>
    <property type="match status" value="1"/>
</dbReference>
<dbReference type="Gene3D" id="3.40.50.300">
    <property type="entry name" value="P-loop containing nucleotide triphosphate hydrolases"/>
    <property type="match status" value="1"/>
</dbReference>
<dbReference type="HAMAP" id="MF_00238">
    <property type="entry name" value="Cytidyl_kinase_type1"/>
    <property type="match status" value="1"/>
</dbReference>
<dbReference type="InterPro" id="IPR003136">
    <property type="entry name" value="Cytidylate_kin"/>
</dbReference>
<dbReference type="InterPro" id="IPR011994">
    <property type="entry name" value="Cytidylate_kinase_dom"/>
</dbReference>
<dbReference type="InterPro" id="IPR027417">
    <property type="entry name" value="P-loop_NTPase"/>
</dbReference>
<dbReference type="NCBIfam" id="TIGR00017">
    <property type="entry name" value="cmk"/>
    <property type="match status" value="1"/>
</dbReference>
<dbReference type="Pfam" id="PF02224">
    <property type="entry name" value="Cytidylate_kin"/>
    <property type="match status" value="1"/>
</dbReference>
<dbReference type="SUPFAM" id="SSF52540">
    <property type="entry name" value="P-loop containing nucleoside triphosphate hydrolases"/>
    <property type="match status" value="1"/>
</dbReference>
<feature type="chain" id="PRO_1000048190" description="Cytidylate kinase">
    <location>
        <begin position="1"/>
        <end position="219"/>
    </location>
</feature>
<feature type="binding site" evidence="1">
    <location>
        <begin position="15"/>
        <end position="23"/>
    </location>
    <ligand>
        <name>ATP</name>
        <dbReference type="ChEBI" id="CHEBI:30616"/>
    </ligand>
</feature>
<comment type="catalytic activity">
    <reaction evidence="1">
        <text>CMP + ATP = CDP + ADP</text>
        <dbReference type="Rhea" id="RHEA:11600"/>
        <dbReference type="ChEBI" id="CHEBI:30616"/>
        <dbReference type="ChEBI" id="CHEBI:58069"/>
        <dbReference type="ChEBI" id="CHEBI:60377"/>
        <dbReference type="ChEBI" id="CHEBI:456216"/>
        <dbReference type="EC" id="2.7.4.25"/>
    </reaction>
</comment>
<comment type="catalytic activity">
    <reaction evidence="1">
        <text>dCMP + ATP = dCDP + ADP</text>
        <dbReference type="Rhea" id="RHEA:25094"/>
        <dbReference type="ChEBI" id="CHEBI:30616"/>
        <dbReference type="ChEBI" id="CHEBI:57566"/>
        <dbReference type="ChEBI" id="CHEBI:58593"/>
        <dbReference type="ChEBI" id="CHEBI:456216"/>
        <dbReference type="EC" id="2.7.4.25"/>
    </reaction>
</comment>
<comment type="subcellular location">
    <subcellularLocation>
        <location evidence="1">Cytoplasm</location>
    </subcellularLocation>
</comment>
<comment type="similarity">
    <text evidence="1">Belongs to the cytidylate kinase family. Type 1 subfamily.</text>
</comment>
<accession>Q2YPN5</accession>
<proteinExistence type="inferred from homology"/>
<protein>
    <recommendedName>
        <fullName evidence="1">Cytidylate kinase</fullName>
        <shortName evidence="1">CK</shortName>
        <ecNumber evidence="1">2.7.4.25</ecNumber>
    </recommendedName>
    <alternativeName>
        <fullName evidence="1">Cytidine monophosphate kinase</fullName>
        <shortName evidence="1">CMP kinase</shortName>
    </alternativeName>
</protein>
<organism>
    <name type="scientific">Brucella abortus (strain 2308)</name>
    <dbReference type="NCBI Taxonomy" id="359391"/>
    <lineage>
        <taxon>Bacteria</taxon>
        <taxon>Pseudomonadati</taxon>
        <taxon>Pseudomonadota</taxon>
        <taxon>Alphaproteobacteria</taxon>
        <taxon>Hyphomicrobiales</taxon>
        <taxon>Brucellaceae</taxon>
        <taxon>Brucella/Ochrobactrum group</taxon>
        <taxon>Brucella</taxon>
    </lineage>
</organism>
<gene>
    <name evidence="1" type="primary">cmk</name>
    <name type="ordered locus">BAB1_0024</name>
</gene>
<keyword id="KW-0067">ATP-binding</keyword>
<keyword id="KW-0963">Cytoplasm</keyword>
<keyword id="KW-0418">Kinase</keyword>
<keyword id="KW-0547">Nucleotide-binding</keyword>
<keyword id="KW-1185">Reference proteome</keyword>
<keyword id="KW-0808">Transferase</keyword>
<reference key="1">
    <citation type="journal article" date="2005" name="Infect. Immun.">
        <title>Whole-genome analyses of speciation events in pathogenic Brucellae.</title>
        <authorList>
            <person name="Chain P.S."/>
            <person name="Comerci D.J."/>
            <person name="Tolmasky M.E."/>
            <person name="Larimer F.W."/>
            <person name="Malfatti S.A."/>
            <person name="Vergez L.M."/>
            <person name="Aguero F."/>
            <person name="Land M.L."/>
            <person name="Ugalde R.A."/>
            <person name="Garcia E."/>
        </authorList>
    </citation>
    <scope>NUCLEOTIDE SEQUENCE [LARGE SCALE GENOMIC DNA]</scope>
    <source>
        <strain>2308</strain>
    </source>
</reference>
<evidence type="ECO:0000255" key="1">
    <source>
        <dbReference type="HAMAP-Rule" id="MF_00238"/>
    </source>
</evidence>
<name>KCY_BRUA2</name>
<sequence>MKSFVVAPFIVAIDGPAASGKGTLARRIATHYGMPHLDTGLTYRAVAKALLDKGLPLDDEALATDAALSLDLLAMDKAVLSAHAIGEAASKVAVMPAVRRALVEAQRHFANALPSSVLDGRDIGTVVCPDAAIKLFVTASPEVRARRRFDEVLARGDTADFAEILADLKKRDERDMNRTDSPLRPAEDAHLLDASEMSIEAAFLAAKKLIDHALAQHRG</sequence>